<organism>
    <name type="scientific">Vaccinia virus (strain Ankara)</name>
    <name type="common">VACV</name>
    <dbReference type="NCBI Taxonomy" id="126794"/>
    <lineage>
        <taxon>Viruses</taxon>
        <taxon>Varidnaviria</taxon>
        <taxon>Bamfordvirae</taxon>
        <taxon>Nucleocytoviricota</taxon>
        <taxon>Pokkesviricetes</taxon>
        <taxon>Chitovirales</taxon>
        <taxon>Poxviridae</taxon>
        <taxon>Chordopoxvirinae</taxon>
        <taxon>Orthopoxvirus</taxon>
        <taxon>Vaccinia virus</taxon>
    </lineage>
</organism>
<gene>
    <name type="primary">OPG201</name>
    <name type="ordered locus">MVA184R</name>
    <name type="ordered locus">ACAM3000_MVA_184</name>
</gene>
<name>IL1BP_VACCA</name>
<accession>O57261</accession>
<organismHost>
    <name type="scientific">Homo sapiens</name>
    <name type="common">Human</name>
    <dbReference type="NCBI Taxonomy" id="9606"/>
</organismHost>
<feature type="signal peptide" evidence="2">
    <location>
        <begin position="1"/>
        <end position="18"/>
    </location>
</feature>
<feature type="chain" id="PRO_0000015461" description="Interleukin-1-binding protein">
    <location>
        <begin position="19"/>
        <end position="326"/>
    </location>
</feature>
<feature type="domain" description="Ig-like 1">
    <location>
        <begin position="24"/>
        <end position="115"/>
    </location>
</feature>
<feature type="domain" description="Ig-like 2">
    <location>
        <begin position="122"/>
        <end position="212"/>
    </location>
</feature>
<feature type="domain" description="Ig-like 3">
    <location>
        <begin position="221"/>
        <end position="322"/>
    </location>
</feature>
<feature type="glycosylation site" description="N-linked (GlcNAc...) asparagine; by host" evidence="2">
    <location>
        <position position="80"/>
    </location>
</feature>
<feature type="glycosylation site" description="N-linked (GlcNAc...) asparagine; by host" evidence="2">
    <location>
        <position position="103"/>
    </location>
</feature>
<feature type="glycosylation site" description="N-linked (GlcNAc...) asparagine; by host" evidence="2">
    <location>
        <position position="113"/>
    </location>
</feature>
<feature type="glycosylation site" description="N-linked (GlcNAc...) asparagine; by host" evidence="2">
    <location>
        <position position="206"/>
    </location>
</feature>
<feature type="glycosylation site" description="N-linked (GlcNAc...) asparagine; by host" evidence="2">
    <location>
        <position position="237"/>
    </location>
</feature>
<feature type="disulfide bond" evidence="3">
    <location>
        <begin position="48"/>
        <end position="99"/>
    </location>
</feature>
<feature type="disulfide bond" evidence="3">
    <location>
        <begin position="143"/>
        <end position="194"/>
    </location>
</feature>
<feature type="disulfide bond" evidence="3">
    <location>
        <begin position="242"/>
        <end position="309"/>
    </location>
</feature>
<evidence type="ECO:0000250" key="1">
    <source>
        <dbReference type="UniProtKB" id="P25212"/>
    </source>
</evidence>
<evidence type="ECO:0000255" key="2"/>
<evidence type="ECO:0000255" key="3">
    <source>
        <dbReference type="PROSITE-ProRule" id="PRU00114"/>
    </source>
</evidence>
<evidence type="ECO:0000305" key="4"/>
<protein>
    <recommendedName>
        <fullName>Interleukin-1-binding protein</fullName>
    </recommendedName>
    <alternativeName>
        <fullName>Protein B16</fullName>
    </alternativeName>
</protein>
<proteinExistence type="inferred from homology"/>
<reference key="1">
    <citation type="journal article" date="1998" name="Virology">
        <title>The complete genomic sequence of the modified vaccinia Ankara strain: comparison with other orthopoxviruses.</title>
        <authorList>
            <person name="Antoine G."/>
            <person name="Scheiflinger F."/>
            <person name="Dorner F."/>
            <person name="Falkner F.G."/>
        </authorList>
    </citation>
    <scope>NUCLEOTIDE SEQUENCE [LARGE SCALE GENOMIC DNA]</scope>
</reference>
<reference key="2">
    <citation type="submission" date="2004-04" db="EMBL/GenBank/DDBJ databases">
        <authorList>
            <person name="Esposito J.J."/>
            <person name="Frace M."/>
            <person name="Sammons S.A."/>
            <person name="Olsen-Rasmussen M.S."/>
            <person name="Osborne J."/>
            <person name="Khristova M."/>
            <person name="Wohlhueter R.M."/>
        </authorList>
    </citation>
    <scope>NUCLEOTIDE SEQUENCE [LARGE SCALE GENOMIC DNA]</scope>
    <source>
        <strain>Isolate Acambis 3000</strain>
    </source>
</reference>
<sequence>MSILPVIFLSIFFYSSFVQTFNAPECIDKGQYFASFMELENEPVILPCPQINTLSSGYNILDILWEKRGADNDRIIPIDNGSNMLILNPTQSDSGIYICITTNETYCDMMSLNLTIVSVSESNIDLISYPQIVNERSTGEMVCPNINAFIASNVNADIIWSGHRRLRNKRLKQRTPGIITIEDVRKNDAGYYTCVLEYIYGGKTYNVTRIVKLEVRDKIIPSTMQLPEGVVTSIGSNLTIACRVSLRPPTTDADVFWISNGMYYEEDDGDGDGRISVANKIYMTDKRRVITSRLNINPVKEEDATTFTCMAFTIPSISKTVTVSIT</sequence>
<keyword id="KW-1015">Disulfide bond</keyword>
<keyword id="KW-0325">Glycoprotein</keyword>
<keyword id="KW-0945">Host-virus interaction</keyword>
<keyword id="KW-0393">Immunoglobulin domain</keyword>
<keyword id="KW-0677">Repeat</keyword>
<keyword id="KW-0964">Secreted</keyword>
<keyword id="KW-0732">Signal</keyword>
<keyword id="KW-0899">Viral immunoevasion</keyword>
<dbReference type="EMBL" id="U94848">
    <property type="protein sequence ID" value="AAB96555.1"/>
    <property type="molecule type" value="Genomic_DNA"/>
</dbReference>
<dbReference type="EMBL" id="AY603355">
    <property type="protein sequence ID" value="AAT10580.1"/>
    <property type="molecule type" value="Genomic_DNA"/>
</dbReference>
<dbReference type="PIR" id="T37450">
    <property type="entry name" value="T37450"/>
</dbReference>
<dbReference type="SMR" id="O57261"/>
<dbReference type="Proteomes" id="UP000159908">
    <property type="component" value="Segment"/>
</dbReference>
<dbReference type="Proteomes" id="UP000172909">
    <property type="component" value="Segment"/>
</dbReference>
<dbReference type="GO" id="GO:0005576">
    <property type="term" value="C:extracellular region"/>
    <property type="evidence" value="ECO:0007669"/>
    <property type="project" value="UniProtKB-SubCell"/>
</dbReference>
<dbReference type="GO" id="GO:0019966">
    <property type="term" value="F:interleukin-1 binding"/>
    <property type="evidence" value="ECO:0007669"/>
    <property type="project" value="InterPro"/>
</dbReference>
<dbReference type="GO" id="GO:0004908">
    <property type="term" value="F:interleukin-1 receptor activity"/>
    <property type="evidence" value="ECO:0007669"/>
    <property type="project" value="InterPro"/>
</dbReference>
<dbReference type="GO" id="GO:0044003">
    <property type="term" value="P:symbiont-mediated perturbation of host process"/>
    <property type="evidence" value="ECO:0007669"/>
    <property type="project" value="InterPro"/>
</dbReference>
<dbReference type="FunFam" id="2.60.40.10:FF:000188">
    <property type="entry name" value="Interleukin-1 receptor accessory protein-like 1"/>
    <property type="match status" value="1"/>
</dbReference>
<dbReference type="Gene3D" id="2.60.40.10">
    <property type="entry name" value="Immunoglobulins"/>
    <property type="match status" value="3"/>
</dbReference>
<dbReference type="InterPro" id="IPR007110">
    <property type="entry name" value="Ig-like_dom"/>
</dbReference>
<dbReference type="InterPro" id="IPR036179">
    <property type="entry name" value="Ig-like_dom_sf"/>
</dbReference>
<dbReference type="InterPro" id="IPR013783">
    <property type="entry name" value="Ig-like_fold"/>
</dbReference>
<dbReference type="InterPro" id="IPR003599">
    <property type="entry name" value="Ig_sub"/>
</dbReference>
<dbReference type="InterPro" id="IPR003598">
    <property type="entry name" value="Ig_sub2"/>
</dbReference>
<dbReference type="InterPro" id="IPR004078">
    <property type="entry name" value="IL-1-bd"/>
</dbReference>
<dbReference type="InterPro" id="IPR015621">
    <property type="entry name" value="IL-1_rcpt_fam"/>
</dbReference>
<dbReference type="InterPro" id="IPR004074">
    <property type="entry name" value="IL-1_rcpt_I/II-typ"/>
</dbReference>
<dbReference type="InterPro" id="IPR013151">
    <property type="entry name" value="Immunoglobulin_dom"/>
</dbReference>
<dbReference type="PANTHER" id="PTHR11890">
    <property type="entry name" value="INTERLEUKIN-1 RECEPTOR FAMILY MEMBER"/>
    <property type="match status" value="1"/>
</dbReference>
<dbReference type="PANTHER" id="PTHR11890:SF3">
    <property type="entry name" value="INTERLEUKIN-1 RECEPTOR TYPE 2"/>
    <property type="match status" value="1"/>
</dbReference>
<dbReference type="Pfam" id="PF00047">
    <property type="entry name" value="ig"/>
    <property type="match status" value="1"/>
</dbReference>
<dbReference type="PRINTS" id="PR01540">
    <property type="entry name" value="INTRLEUKN1BP"/>
</dbReference>
<dbReference type="PRINTS" id="PR01536">
    <property type="entry name" value="INTRLKN1R12F"/>
</dbReference>
<dbReference type="SMART" id="SM00409">
    <property type="entry name" value="IG"/>
    <property type="match status" value="3"/>
</dbReference>
<dbReference type="SMART" id="SM00408">
    <property type="entry name" value="IGc2"/>
    <property type="match status" value="3"/>
</dbReference>
<dbReference type="SUPFAM" id="SSF48726">
    <property type="entry name" value="Immunoglobulin"/>
    <property type="match status" value="3"/>
</dbReference>
<dbReference type="PROSITE" id="PS50835">
    <property type="entry name" value="IG_LIKE"/>
    <property type="match status" value="3"/>
</dbReference>
<comment type="function">
    <text evidence="1">May reduce the host inflammatory response by interacting with inteleukin-1 beta (Il1b) and thus decreasing the association between IL1B and its cellular receptor.</text>
</comment>
<comment type="subunit">
    <text evidence="1">Interacts with mouse Il1b.</text>
</comment>
<comment type="subcellular location">
    <subcellularLocation>
        <location evidence="1">Secreted</location>
    </subcellularLocation>
</comment>
<comment type="similarity">
    <text evidence="4">Belongs to the interleukin-1 receptor family.</text>
</comment>